<evidence type="ECO:0000255" key="1">
    <source>
        <dbReference type="HAMAP-Rule" id="MF_00197"/>
    </source>
</evidence>
<sequence length="289" mass="30846">MKLSFTKMHGAGNDFVVLDGYTRALPPLTGAQVRALADRHFGIGADQLLLVEKPTVDGADFKYRIFNCDGGEVEHCGNGARCFVKFVRDHGLTGKASVRVEVKHGVITLTMQDNGEVVVDMGAPVFEPARVPFDASGLDGRREGADTLWPLPVNGVTRWISVVSMGNPHAVQIVDDAEAFAVRVDGPAIECDPRFPQRVNAGFMQIVSRHEVNLRVYERGAGETLACGTGACAAVAAGIRRGRLDSPVTVHTHGGTLTISWNGACDERAPLMMAGPATTVFEGVIELPA</sequence>
<dbReference type="EC" id="5.1.1.7" evidence="1"/>
<dbReference type="EMBL" id="BX571965">
    <property type="protein sequence ID" value="CAH34197.1"/>
    <property type="molecule type" value="Genomic_DNA"/>
</dbReference>
<dbReference type="RefSeq" id="WP_004545660.1">
    <property type="nucleotide sequence ID" value="NZ_CP009538.1"/>
</dbReference>
<dbReference type="RefSeq" id="YP_106838.1">
    <property type="nucleotide sequence ID" value="NC_006350.1"/>
</dbReference>
<dbReference type="SMR" id="Q63YH7"/>
<dbReference type="STRING" id="272560.BPSL0210"/>
<dbReference type="KEGG" id="bps:BPSL0210"/>
<dbReference type="PATRIC" id="fig|272560.51.peg.1507"/>
<dbReference type="eggNOG" id="COG0253">
    <property type="taxonomic scope" value="Bacteria"/>
</dbReference>
<dbReference type="UniPathway" id="UPA00034">
    <property type="reaction ID" value="UER00025"/>
</dbReference>
<dbReference type="Proteomes" id="UP000000605">
    <property type="component" value="Chromosome 1"/>
</dbReference>
<dbReference type="GO" id="GO:0005829">
    <property type="term" value="C:cytosol"/>
    <property type="evidence" value="ECO:0007669"/>
    <property type="project" value="TreeGrafter"/>
</dbReference>
<dbReference type="GO" id="GO:0008837">
    <property type="term" value="F:diaminopimelate epimerase activity"/>
    <property type="evidence" value="ECO:0007669"/>
    <property type="project" value="UniProtKB-UniRule"/>
</dbReference>
<dbReference type="GO" id="GO:0009089">
    <property type="term" value="P:lysine biosynthetic process via diaminopimelate"/>
    <property type="evidence" value="ECO:0007669"/>
    <property type="project" value="UniProtKB-UniRule"/>
</dbReference>
<dbReference type="FunFam" id="3.10.310.10:FF:000001">
    <property type="entry name" value="Diaminopimelate epimerase"/>
    <property type="match status" value="1"/>
</dbReference>
<dbReference type="Gene3D" id="3.10.310.10">
    <property type="entry name" value="Diaminopimelate Epimerase, Chain A, domain 1"/>
    <property type="match status" value="2"/>
</dbReference>
<dbReference type="HAMAP" id="MF_00197">
    <property type="entry name" value="DAP_epimerase"/>
    <property type="match status" value="1"/>
</dbReference>
<dbReference type="InterPro" id="IPR018510">
    <property type="entry name" value="DAP_epimerase_AS"/>
</dbReference>
<dbReference type="InterPro" id="IPR001653">
    <property type="entry name" value="DAP_epimerase_DapF"/>
</dbReference>
<dbReference type="NCBIfam" id="TIGR00652">
    <property type="entry name" value="DapF"/>
    <property type="match status" value="1"/>
</dbReference>
<dbReference type="PANTHER" id="PTHR31689:SF0">
    <property type="entry name" value="DIAMINOPIMELATE EPIMERASE"/>
    <property type="match status" value="1"/>
</dbReference>
<dbReference type="PANTHER" id="PTHR31689">
    <property type="entry name" value="DIAMINOPIMELATE EPIMERASE, CHLOROPLASTIC"/>
    <property type="match status" value="1"/>
</dbReference>
<dbReference type="Pfam" id="PF01678">
    <property type="entry name" value="DAP_epimerase"/>
    <property type="match status" value="2"/>
</dbReference>
<dbReference type="SUPFAM" id="SSF54506">
    <property type="entry name" value="Diaminopimelate epimerase-like"/>
    <property type="match status" value="1"/>
</dbReference>
<dbReference type="PROSITE" id="PS01326">
    <property type="entry name" value="DAP_EPIMERASE"/>
    <property type="match status" value="1"/>
</dbReference>
<comment type="function">
    <text evidence="1">Catalyzes the stereoinversion of LL-2,6-diaminopimelate (L,L-DAP) to meso-diaminopimelate (meso-DAP), a precursor of L-lysine and an essential component of the bacterial peptidoglycan.</text>
</comment>
<comment type="catalytic activity">
    <reaction evidence="1">
        <text>(2S,6S)-2,6-diaminopimelate = meso-2,6-diaminopimelate</text>
        <dbReference type="Rhea" id="RHEA:15393"/>
        <dbReference type="ChEBI" id="CHEBI:57609"/>
        <dbReference type="ChEBI" id="CHEBI:57791"/>
        <dbReference type="EC" id="5.1.1.7"/>
    </reaction>
</comment>
<comment type="pathway">
    <text evidence="1">Amino-acid biosynthesis; L-lysine biosynthesis via DAP pathway; DL-2,6-diaminopimelate from LL-2,6-diaminopimelate: step 1/1.</text>
</comment>
<comment type="subunit">
    <text evidence="1">Homodimer.</text>
</comment>
<comment type="subcellular location">
    <subcellularLocation>
        <location evidence="1">Cytoplasm</location>
    </subcellularLocation>
</comment>
<comment type="similarity">
    <text evidence="1">Belongs to the diaminopimelate epimerase family.</text>
</comment>
<protein>
    <recommendedName>
        <fullName evidence="1">Diaminopimelate epimerase</fullName>
        <shortName evidence="1">DAP epimerase</shortName>
        <ecNumber evidence="1">5.1.1.7</ecNumber>
    </recommendedName>
    <alternativeName>
        <fullName evidence="1">PLP-independent amino acid racemase</fullName>
    </alternativeName>
</protein>
<accession>Q63YH7</accession>
<gene>
    <name evidence="1" type="primary">dapF</name>
    <name type="ordered locus">BPSL0210</name>
</gene>
<name>DAPF_BURPS</name>
<feature type="chain" id="PRO_1000011860" description="Diaminopimelate epimerase">
    <location>
        <begin position="1"/>
        <end position="289"/>
    </location>
</feature>
<feature type="active site" description="Proton donor" evidence="1">
    <location>
        <position position="76"/>
    </location>
</feature>
<feature type="active site" description="Proton acceptor" evidence="1">
    <location>
        <position position="227"/>
    </location>
</feature>
<feature type="binding site" evidence="1">
    <location>
        <position position="13"/>
    </location>
    <ligand>
        <name>substrate</name>
    </ligand>
</feature>
<feature type="binding site" evidence="1">
    <location>
        <position position="47"/>
    </location>
    <ligand>
        <name>substrate</name>
    </ligand>
</feature>
<feature type="binding site" evidence="1">
    <location>
        <position position="67"/>
    </location>
    <ligand>
        <name>substrate</name>
    </ligand>
</feature>
<feature type="binding site" evidence="1">
    <location>
        <begin position="77"/>
        <end position="78"/>
    </location>
    <ligand>
        <name>substrate</name>
    </ligand>
</feature>
<feature type="binding site" evidence="1">
    <location>
        <position position="167"/>
    </location>
    <ligand>
        <name>substrate</name>
    </ligand>
</feature>
<feature type="binding site" evidence="1">
    <location>
        <position position="200"/>
    </location>
    <ligand>
        <name>substrate</name>
    </ligand>
</feature>
<feature type="binding site" evidence="1">
    <location>
        <begin position="218"/>
        <end position="219"/>
    </location>
    <ligand>
        <name>substrate</name>
    </ligand>
</feature>
<feature type="binding site" evidence="1">
    <location>
        <begin position="228"/>
        <end position="229"/>
    </location>
    <ligand>
        <name>substrate</name>
    </ligand>
</feature>
<feature type="site" description="Could be important to modulate the pK values of the two catalytic cysteine residues" evidence="1">
    <location>
        <position position="169"/>
    </location>
</feature>
<feature type="site" description="Could be important to modulate the pK values of the two catalytic cysteine residues" evidence="1">
    <location>
        <position position="218"/>
    </location>
</feature>
<reference key="1">
    <citation type="journal article" date="2004" name="Proc. Natl. Acad. Sci. U.S.A.">
        <title>Genomic plasticity of the causative agent of melioidosis, Burkholderia pseudomallei.</title>
        <authorList>
            <person name="Holden M.T.G."/>
            <person name="Titball R.W."/>
            <person name="Peacock S.J."/>
            <person name="Cerdeno-Tarraga A.-M."/>
            <person name="Atkins T."/>
            <person name="Crossman L.C."/>
            <person name="Pitt T."/>
            <person name="Churcher C."/>
            <person name="Mungall K.L."/>
            <person name="Bentley S.D."/>
            <person name="Sebaihia M."/>
            <person name="Thomson N.R."/>
            <person name="Bason N."/>
            <person name="Beacham I.R."/>
            <person name="Brooks K."/>
            <person name="Brown K.A."/>
            <person name="Brown N.F."/>
            <person name="Challis G.L."/>
            <person name="Cherevach I."/>
            <person name="Chillingworth T."/>
            <person name="Cronin A."/>
            <person name="Crossett B."/>
            <person name="Davis P."/>
            <person name="DeShazer D."/>
            <person name="Feltwell T."/>
            <person name="Fraser A."/>
            <person name="Hance Z."/>
            <person name="Hauser H."/>
            <person name="Holroyd S."/>
            <person name="Jagels K."/>
            <person name="Keith K.E."/>
            <person name="Maddison M."/>
            <person name="Moule S."/>
            <person name="Price C."/>
            <person name="Quail M.A."/>
            <person name="Rabbinowitsch E."/>
            <person name="Rutherford K."/>
            <person name="Sanders M."/>
            <person name="Simmonds M."/>
            <person name="Songsivilai S."/>
            <person name="Stevens K."/>
            <person name="Tumapa S."/>
            <person name="Vesaratchavest M."/>
            <person name="Whitehead S."/>
            <person name="Yeats C."/>
            <person name="Barrell B.G."/>
            <person name="Oyston P.C.F."/>
            <person name="Parkhill J."/>
        </authorList>
    </citation>
    <scope>NUCLEOTIDE SEQUENCE [LARGE SCALE GENOMIC DNA]</scope>
    <source>
        <strain>K96243</strain>
    </source>
</reference>
<keyword id="KW-0028">Amino-acid biosynthesis</keyword>
<keyword id="KW-0963">Cytoplasm</keyword>
<keyword id="KW-0413">Isomerase</keyword>
<keyword id="KW-0457">Lysine biosynthesis</keyword>
<keyword id="KW-1185">Reference proteome</keyword>
<proteinExistence type="inferred from homology"/>
<organism>
    <name type="scientific">Burkholderia pseudomallei (strain K96243)</name>
    <dbReference type="NCBI Taxonomy" id="272560"/>
    <lineage>
        <taxon>Bacteria</taxon>
        <taxon>Pseudomonadati</taxon>
        <taxon>Pseudomonadota</taxon>
        <taxon>Betaproteobacteria</taxon>
        <taxon>Burkholderiales</taxon>
        <taxon>Burkholderiaceae</taxon>
        <taxon>Burkholderia</taxon>
        <taxon>pseudomallei group</taxon>
    </lineage>
</organism>